<organism>
    <name type="scientific">Banna virus</name>
    <name type="common">BAV</name>
    <dbReference type="NCBI Taxonomy" id="77763"/>
    <lineage>
        <taxon>Viruses</taxon>
        <taxon>Riboviria</taxon>
        <taxon>Orthornavirae</taxon>
        <taxon>Duplornaviricota</taxon>
        <taxon>Resentoviricetes</taxon>
        <taxon>Reovirales</taxon>
        <taxon>Sedoreoviridae</taxon>
        <taxon>Seadornavirus</taxon>
        <taxon>Seadornavirus bannaense</taxon>
    </lineage>
</organism>
<proteinExistence type="predicted"/>
<name>NS3_BANNV</name>
<gene>
    <name type="primary">Segment-7</name>
    <name type="synonym">S7</name>
</gene>
<feature type="chain" id="PRO_0000404231" description="Non-structural protein 3">
    <location>
        <begin position="1"/>
        <end position="306"/>
    </location>
</feature>
<dbReference type="EMBL" id="AF052018">
    <property type="protein sequence ID" value="AAC72045.1"/>
    <property type="molecule type" value="Genomic_RNA"/>
</dbReference>
<dbReference type="RefSeq" id="NP_694462.1">
    <property type="nucleotide sequence ID" value="NC_004204.1"/>
</dbReference>
<dbReference type="KEGG" id="vg:995346"/>
<dbReference type="OrthoDB" id="35497at10239"/>
<dbReference type="Proteomes" id="UP000000832">
    <property type="component" value="Genome"/>
</dbReference>
<dbReference type="InterPro" id="IPR011009">
    <property type="entry name" value="Kinase-like_dom_sf"/>
</dbReference>
<dbReference type="InterPro" id="IPR009973">
    <property type="entry name" value="Seadorna_VP7"/>
</dbReference>
<dbReference type="Pfam" id="PF07387">
    <property type="entry name" value="Seadorna_VP7"/>
    <property type="match status" value="1"/>
</dbReference>
<dbReference type="SUPFAM" id="SSF56112">
    <property type="entry name" value="Protein kinase-like (PK-like)"/>
    <property type="match status" value="1"/>
</dbReference>
<sequence length="306" mass="34991">MNNGQATITRNGGRFEIRCRHLDRDYTMPLPNATSNDNFLDCIKFITECVGFDYVSSGFKLIANVNDFQHLNGNSTLLIGKTKIGPLILKKVRSLPCCNDALFRNEFRILAKMHGILRLKNDVNGHKYGIILERCYKPKINFSNFVTAINDLDVFHSSNQHLLHGDANPDNIMSDSEGYLKLVDPVCLLENQVNMVNIEYESLTQEAEKKVFINSLLQLVEKQMSATIDEIYVNLKEVNPSFNLEHGLKLSDLLDNIDVYNSDHWKLMLNHRPMMPELSVLNDLTYYDTGEVRDLVTEDLDDEDDV</sequence>
<reference key="1">
    <citation type="journal article" date="1998" name="J. Gen. Virol.">
        <title>Comparative sequence analysis of American, European and Asian isolates of viruses in the genus Coltivirus.</title>
        <authorList>
            <person name="Attoui H."/>
            <person name="Charrel R.N."/>
            <person name="Billoir F."/>
            <person name="Cantaloube J.F."/>
            <person name="de Micco P."/>
            <person name="de Lamballerie X."/>
        </authorList>
    </citation>
    <scope>NUCLEOTIDE SEQUENCE [GENOMIC RNA]</scope>
    <source>
        <strain>JKT-6423</strain>
    </source>
</reference>
<accession>Q9YWQ0</accession>
<protein>
    <recommendedName>
        <fullName>Non-structural protein 3</fullName>
        <shortName>NS3</shortName>
    </recommendedName>
</protein>
<keyword id="KW-1185">Reference proteome</keyword>